<organism>
    <name type="scientific">Treponema pallidum subsp. pallidum (strain SS14)</name>
    <dbReference type="NCBI Taxonomy" id="455434"/>
    <lineage>
        <taxon>Bacteria</taxon>
        <taxon>Pseudomonadati</taxon>
        <taxon>Spirochaetota</taxon>
        <taxon>Spirochaetia</taxon>
        <taxon>Spirochaetales</taxon>
        <taxon>Treponemataceae</taxon>
        <taxon>Treponema</taxon>
    </lineage>
</organism>
<comment type="function">
    <text evidence="1">Binds directly to 23S rRNA. The L1 stalk is quite mobile in the ribosome, and is involved in E site tRNA release.</text>
</comment>
<comment type="function">
    <text evidence="1">Protein L1 is also a translational repressor protein, it controls the translation of the L11 operon by binding to its mRNA.</text>
</comment>
<comment type="subunit">
    <text evidence="1">Part of the 50S ribosomal subunit.</text>
</comment>
<comment type="similarity">
    <text evidence="1">Belongs to the universal ribosomal protein uL1 family.</text>
</comment>
<sequence>MKRGKKYRAAVARYDRAERFSLDRAVGLLKEVRYASFDETVEVHVSLRLKKNQTVRDTVVLPHRFRAEVRVLVFCKEDRVSEALAAGAAYAGGAEYLEKVKGGWFDFDVVVASPDMMKDVGRLGMVLGRRGLMPNPRTGTVSADLGAAVCELKKGRVEFRADKTGVVHLAVGKTTMDSAQIVENVDVFLSEMDRKKPVDVKAGFVRSISLSSSMGPGIWVVHKSEE</sequence>
<gene>
    <name evidence="1" type="primary">rplA</name>
    <name type="ordered locus">TPASS_0238</name>
</gene>
<accession>B2S2I5</accession>
<feature type="chain" id="PRO_1000141478" description="Large ribosomal subunit protein uL1">
    <location>
        <begin position="1"/>
        <end position="226"/>
    </location>
</feature>
<proteinExistence type="inferred from homology"/>
<name>RL1_TREPS</name>
<protein>
    <recommendedName>
        <fullName evidence="1">Large ribosomal subunit protein uL1</fullName>
    </recommendedName>
    <alternativeName>
        <fullName evidence="2">50S ribosomal protein L1</fullName>
    </alternativeName>
</protein>
<evidence type="ECO:0000255" key="1">
    <source>
        <dbReference type="HAMAP-Rule" id="MF_01318"/>
    </source>
</evidence>
<evidence type="ECO:0000305" key="2"/>
<dbReference type="EMBL" id="CP000805">
    <property type="protein sequence ID" value="ACD70664.1"/>
    <property type="molecule type" value="Genomic_DNA"/>
</dbReference>
<dbReference type="RefSeq" id="WP_010881686.1">
    <property type="nucleotide sequence ID" value="NC_021508.1"/>
</dbReference>
<dbReference type="SMR" id="B2S2I5"/>
<dbReference type="GeneID" id="93876030"/>
<dbReference type="KEGG" id="tpp:TPASS_0238"/>
<dbReference type="PATRIC" id="fig|455434.6.peg.242"/>
<dbReference type="Proteomes" id="UP000001202">
    <property type="component" value="Chromosome"/>
</dbReference>
<dbReference type="GO" id="GO:0015934">
    <property type="term" value="C:large ribosomal subunit"/>
    <property type="evidence" value="ECO:0007669"/>
    <property type="project" value="InterPro"/>
</dbReference>
<dbReference type="GO" id="GO:0019843">
    <property type="term" value="F:rRNA binding"/>
    <property type="evidence" value="ECO:0007669"/>
    <property type="project" value="UniProtKB-UniRule"/>
</dbReference>
<dbReference type="GO" id="GO:0003735">
    <property type="term" value="F:structural constituent of ribosome"/>
    <property type="evidence" value="ECO:0007669"/>
    <property type="project" value="InterPro"/>
</dbReference>
<dbReference type="GO" id="GO:0000049">
    <property type="term" value="F:tRNA binding"/>
    <property type="evidence" value="ECO:0007669"/>
    <property type="project" value="UniProtKB-KW"/>
</dbReference>
<dbReference type="GO" id="GO:0006417">
    <property type="term" value="P:regulation of translation"/>
    <property type="evidence" value="ECO:0007669"/>
    <property type="project" value="UniProtKB-KW"/>
</dbReference>
<dbReference type="GO" id="GO:0006412">
    <property type="term" value="P:translation"/>
    <property type="evidence" value="ECO:0007669"/>
    <property type="project" value="UniProtKB-UniRule"/>
</dbReference>
<dbReference type="CDD" id="cd00403">
    <property type="entry name" value="Ribosomal_L1"/>
    <property type="match status" value="1"/>
</dbReference>
<dbReference type="FunFam" id="3.40.50.790:FF:000001">
    <property type="entry name" value="50S ribosomal protein L1"/>
    <property type="match status" value="1"/>
</dbReference>
<dbReference type="Gene3D" id="3.30.190.20">
    <property type="match status" value="1"/>
</dbReference>
<dbReference type="Gene3D" id="3.40.50.790">
    <property type="match status" value="1"/>
</dbReference>
<dbReference type="HAMAP" id="MF_01318_B">
    <property type="entry name" value="Ribosomal_uL1_B"/>
    <property type="match status" value="1"/>
</dbReference>
<dbReference type="InterPro" id="IPR005878">
    <property type="entry name" value="Ribosom_uL1_bac-type"/>
</dbReference>
<dbReference type="InterPro" id="IPR002143">
    <property type="entry name" value="Ribosomal_uL1"/>
</dbReference>
<dbReference type="InterPro" id="IPR023674">
    <property type="entry name" value="Ribosomal_uL1-like"/>
</dbReference>
<dbReference type="InterPro" id="IPR028364">
    <property type="entry name" value="Ribosomal_uL1/biogenesis"/>
</dbReference>
<dbReference type="InterPro" id="IPR016095">
    <property type="entry name" value="Ribosomal_uL1_3-a/b-sand"/>
</dbReference>
<dbReference type="InterPro" id="IPR023673">
    <property type="entry name" value="Ribosomal_uL1_CS"/>
</dbReference>
<dbReference type="NCBIfam" id="TIGR01169">
    <property type="entry name" value="rplA_bact"/>
    <property type="match status" value="1"/>
</dbReference>
<dbReference type="PANTHER" id="PTHR36427">
    <property type="entry name" value="54S RIBOSOMAL PROTEIN L1, MITOCHONDRIAL"/>
    <property type="match status" value="1"/>
</dbReference>
<dbReference type="PANTHER" id="PTHR36427:SF3">
    <property type="entry name" value="LARGE RIBOSOMAL SUBUNIT PROTEIN UL1M"/>
    <property type="match status" value="1"/>
</dbReference>
<dbReference type="Pfam" id="PF00687">
    <property type="entry name" value="Ribosomal_L1"/>
    <property type="match status" value="1"/>
</dbReference>
<dbReference type="PIRSF" id="PIRSF002155">
    <property type="entry name" value="Ribosomal_L1"/>
    <property type="match status" value="1"/>
</dbReference>
<dbReference type="SUPFAM" id="SSF56808">
    <property type="entry name" value="Ribosomal protein L1"/>
    <property type="match status" value="1"/>
</dbReference>
<dbReference type="PROSITE" id="PS01199">
    <property type="entry name" value="RIBOSOMAL_L1"/>
    <property type="match status" value="1"/>
</dbReference>
<keyword id="KW-0678">Repressor</keyword>
<keyword id="KW-0687">Ribonucleoprotein</keyword>
<keyword id="KW-0689">Ribosomal protein</keyword>
<keyword id="KW-0694">RNA-binding</keyword>
<keyword id="KW-0699">rRNA-binding</keyword>
<keyword id="KW-0810">Translation regulation</keyword>
<keyword id="KW-0820">tRNA-binding</keyword>
<reference key="1">
    <citation type="journal article" date="2008" name="BMC Microbiol.">
        <title>Complete genome sequence of Treponema pallidum ssp. pallidum strain SS14 determined with oligonucleotide arrays.</title>
        <authorList>
            <person name="Matejkova P."/>
            <person name="Strouhal M."/>
            <person name="Smajs D."/>
            <person name="Norris S.J."/>
            <person name="Palzkill T."/>
            <person name="Petrosino J.F."/>
            <person name="Sodergren E."/>
            <person name="Norton J.E."/>
            <person name="Singh J."/>
            <person name="Richmond T.A."/>
            <person name="Molla M.N."/>
            <person name="Albert T.J."/>
            <person name="Weinstock G.M."/>
        </authorList>
    </citation>
    <scope>NUCLEOTIDE SEQUENCE [LARGE SCALE GENOMIC DNA]</scope>
    <source>
        <strain>SS14</strain>
    </source>
</reference>